<protein>
    <recommendedName>
        <fullName>Protein cup</fullName>
    </recommendedName>
    <alternativeName>
        <fullName>Oskar ribonucleoprotein complex 147 kDa subunit</fullName>
    </alternativeName>
</protein>
<name>CUP_DROME</name>
<comment type="function">
    <text evidence="4 5 6 7 9 11 12 13 14 17 18">Adapter protein that plays a central role in localization of transcripts in the oocyte and in young embryos (PubMed:9118812). Maintains RNA targets in a repressed state by promoting their deadenylation and protects deadenylated mRNAs from further degradation (PubMed:21937713). Binds to and recruits eIF-4E to the 3'-UTR of some mRNA targets which prevents interaction between eIF4E1 and eIF4G (PubMed:14685270, PubMed:15465908, PubMed:21081899). This may contribute to translational repression but does not appear to be necessary for it to occur (PubMed:21081899). Can promote translational repression independently of deadenylation and eIF4E1 binding (PubMed:21937713). Required for correct localization of eIF4E1 in the developing oocyte (PubMed:15465908). Required for translational repression of oskar (osk) mRNA (PubMed:14691132, PubMed:14723848). Also required for the translational repression of nanos (nos) mRNA (PubMed:21081899). Promotes the accumulation of the germ plasm components osk, vas and stau at the posterior pole of the oocyte and is required for germ cell development (PubMed:17277377, PubMed:22454519). Represses orb positive autoregulatory activity which prevents premature activation of orb and ensures its accumulation specifically in the developing oocyte (PubMed:22164257). In 0-1 hour embryos, forms a complex with me31B, cup, tral and pAbp which binds to various mRNAs including maternal mRNAs, and down-regulates their expression during the maternal-to-zygotic transition (PubMed:28875934).</text>
</comment>
<comment type="subunit">
    <text evidence="2 3 4 5 6 7 9 11 12 13 14 15 17">Component of the osk RNP complex, which is composed of at least exu, yps, aret/bruno, cup, and the mRNA of osk (PubMed:10662770). Interacts with the decapping activators me31B and tral (PubMed:21937713). Component of the nanos RNP complex, which is composed of at least smg, cup, tral, me31B, the CCR4-NOT complex members Rga/NOT2 and Caf1, and the mRNA of nanos (nos) (PubMed:21081899). Interacts with btz (PubMed:14691132, PubMed:14723848). Recruited to the 3'-UTR of nos and osk mRNAs by smg and btz, respectively (PubMed:14685270, PubMed:14691132). Forms a ribonucleoprotein complex (RNP) containing at least me31B, eIF4E1, cup, tral and pAbp; this interaction is required for the translational silencing of maternal mRNAs during the maternal-to-zygotic transition (PubMed:28875934). No interaction was detected with pAbp in 1-5 hour embryos (PubMed:28875934). Interacts with osk and vas (PubMed:22454519). Interacts with Pop2, twin/CCR4, Rga, Not3 and Not1 which are all core components of the CCR4-NOT deadenylase complex; interaction with the complex is required for cup deadenylation activity (PubMed:21937713). Interacts with nanos (PubMed:11060247). Interacts with smg (PubMed:14685270). Interacts (via YXXXXLphi motifs) with eIF4E1; the interaction promotes retention of cup in the cytoplasm (PubMed:14685270, PubMed:14723848, PubMed:15465908, PubMed:21937713, PubMed:22832024). Interacts with orb; the interaction represses the orb positive autoregulatory loop (PubMed:22164257). Interacts with Nup154 (PubMed:17277377).</text>
</comment>
<comment type="interaction">
    <interactant intactId="EBI-95398">
        <id>Q9VMA3</id>
    </interactant>
    <interactant intactId="EBI-198574">
        <id>P48598</id>
        <label>eIF4E1</label>
    </interactant>
    <organismsDiffer>false</organismsDiffer>
    <experiments>6</experiments>
</comment>
<comment type="interaction">
    <interactant intactId="EBI-95398">
        <id>Q9VMA3</id>
    </interactant>
    <interactant intactId="EBI-300281">
        <id>P23128</id>
        <label>me31B</label>
    </interactant>
    <organismsDiffer>false</organismsDiffer>
    <experiments>3</experiments>
</comment>
<comment type="interaction">
    <interactant intactId="EBI-95398">
        <id>Q9VMA3</id>
    </interactant>
    <interactant intactId="EBI-108638">
        <id>Q23972</id>
        <label>smg</label>
    </interactant>
    <organismsDiffer>false</organismsDiffer>
    <experiments>4</experiments>
</comment>
<comment type="subcellular location">
    <subcellularLocation>
        <location evidence="7 9 16 18">Cytoplasm</location>
    </subcellularLocation>
    <subcellularLocation>
        <location evidence="7 16">Nucleus</location>
    </subcellularLocation>
    <subcellularLocation>
        <location evidence="8">Cytoplasm</location>
        <location evidence="8">Cytoplasmic ribonucleoprotein granule</location>
    </subcellularLocation>
    <text evidence="7 14 16">Retained in the cytoplasm by interaction with eIF4E1. Located throughout the cytoplasm of all germline cells and is excluded from the nucleus of nurse cells, oocytes and follicular cells (PubMed:15465908). During oogenesis, accumulates in the cytoplasm at the posterior end of the forming oocyte (PubMed:15465908). Component of the germ plasm in developing oocytes (PubMed:22454519). Does not localize in processing bodies (P-bodies) (PubMed:24335285).</text>
</comment>
<comment type="tissue specificity">
    <text evidence="18">Predominantly expressed in ovaries and in 0-2 hours old embryos. Weakly expressed in testis. Expressed in young embryos through stage 9, then it decreases throughout the rest of embryogenesis. In ovaries, it is expressed in germ cells throughout pre-vitellogenic development, but is not expressed in the somatic follicle cells. In germarial cysts, the protein (and not the transcripts) is transported selectively into the oocyte.</text>
</comment>
<comment type="developmental stage">
    <text evidence="14 17">Expressed in the egg chamber and more specifically in nurse cells (at protein level) (PubMed:17277377). Expressed during the first 2 hours of embryogenesis but is absent in 2-5 hour embryos (at protein level) (PubMed:28875934). Expressed both maternally and zygotically (PubMed:9118812). Expressed throughout embryogenesis (PubMed:22454519). In stage 2, uniformly distributed throughout the whole embryo (PubMed:22454519). During blastoderm formation, concentrated at the posterior pole to become incorporated into newly formed germ cells (PubMed:22454519). Subsequently accumulates specifically in the pole cells at stage 10, when they migrate through the posterior midgut primordium, and during stage 14, when the germ cells reach their final destination (PubMed:22454519).</text>
</comment>
<comment type="domain">
    <text evidence="4 6">The YXXXXLphi motifs mediate interaction with eIF4E1.</text>
</comment>
<comment type="disruption phenotype">
    <text evidence="13 14">Mislocalization and precocious expression of orb in the ovary, accumulation of high levels of orb in nurse cells, elongation of orb poly-A tails, hyperphosphorylation of orb and reduced osk mRNA levels (PubMed:22164257). Reduced number of germ cells (PubMed:22454519).</text>
</comment>
<comment type="similarity">
    <text evidence="19">Belongs to the 4E-T/EIF4E-T family.</text>
</comment>
<comment type="sequence caution" evidence="19">
    <conflict type="erroneous initiation">
        <sequence resource="EMBL-CDS" id="AAB64427"/>
    </conflict>
    <text>Extended N-terminus.</text>
</comment>
<comment type="sequence caution" evidence="19">
    <conflict type="erroneous initiation">
        <sequence resource="EMBL-CDS" id="AAL39852"/>
    </conflict>
    <text>Extended N-terminus.</text>
</comment>
<proteinExistence type="evidence at protein level"/>
<keyword id="KW-0002">3D-structure</keyword>
<keyword id="KW-0963">Cytoplasm</keyword>
<keyword id="KW-0217">Developmental protein</keyword>
<keyword id="KW-0221">Differentiation</keyword>
<keyword id="KW-0539">Nucleus</keyword>
<keyword id="KW-0896">Oogenesis</keyword>
<keyword id="KW-0597">Phosphoprotein</keyword>
<keyword id="KW-1185">Reference proteome</keyword>
<keyword id="KW-0677">Repeat</keyword>
<keyword id="KW-0678">Repressor</keyword>
<keyword id="KW-0804">Transcription</keyword>
<keyword id="KW-0805">Transcription regulation</keyword>
<reference key="1">
    <citation type="journal article" date="1997" name="Development">
        <title>The Drosophila gene fs(2)cup interacts with otu to define a cytoplasmic pathway required for the structure and function of germ-line chromosomes.</title>
        <authorList>
            <person name="Keyes L.N."/>
            <person name="Spradling A.C."/>
        </authorList>
    </citation>
    <scope>NUCLEOTIDE SEQUENCE [MRNA]</scope>
    <scope>FUNCTION</scope>
    <scope>SUBCELLULAR LOCATION</scope>
    <scope>TISSUE SPECIFICITY</scope>
    <scope>DEVELOPMENTAL STAGE</scope>
    <source>
        <tissue>Ovary</tissue>
    </source>
</reference>
<reference key="2">
    <citation type="journal article" date="2000" name="Science">
        <title>The genome sequence of Drosophila melanogaster.</title>
        <authorList>
            <person name="Adams M.D."/>
            <person name="Celniker S.E."/>
            <person name="Holt R.A."/>
            <person name="Evans C.A."/>
            <person name="Gocayne J.D."/>
            <person name="Amanatides P.G."/>
            <person name="Scherer S.E."/>
            <person name="Li P.W."/>
            <person name="Hoskins R.A."/>
            <person name="Galle R.F."/>
            <person name="George R.A."/>
            <person name="Lewis S.E."/>
            <person name="Richards S."/>
            <person name="Ashburner M."/>
            <person name="Henderson S.N."/>
            <person name="Sutton G.G."/>
            <person name="Wortman J.R."/>
            <person name="Yandell M.D."/>
            <person name="Zhang Q."/>
            <person name="Chen L.X."/>
            <person name="Brandon R.C."/>
            <person name="Rogers Y.-H.C."/>
            <person name="Blazej R.G."/>
            <person name="Champe M."/>
            <person name="Pfeiffer B.D."/>
            <person name="Wan K.H."/>
            <person name="Doyle C."/>
            <person name="Baxter E.G."/>
            <person name="Helt G."/>
            <person name="Nelson C.R."/>
            <person name="Miklos G.L.G."/>
            <person name="Abril J.F."/>
            <person name="Agbayani A."/>
            <person name="An H.-J."/>
            <person name="Andrews-Pfannkoch C."/>
            <person name="Baldwin D."/>
            <person name="Ballew R.M."/>
            <person name="Basu A."/>
            <person name="Baxendale J."/>
            <person name="Bayraktaroglu L."/>
            <person name="Beasley E.M."/>
            <person name="Beeson K.Y."/>
            <person name="Benos P.V."/>
            <person name="Berman B.P."/>
            <person name="Bhandari D."/>
            <person name="Bolshakov S."/>
            <person name="Borkova D."/>
            <person name="Botchan M.R."/>
            <person name="Bouck J."/>
            <person name="Brokstein P."/>
            <person name="Brottier P."/>
            <person name="Burtis K.C."/>
            <person name="Busam D.A."/>
            <person name="Butler H."/>
            <person name="Cadieu E."/>
            <person name="Center A."/>
            <person name="Chandra I."/>
            <person name="Cherry J.M."/>
            <person name="Cawley S."/>
            <person name="Dahlke C."/>
            <person name="Davenport L.B."/>
            <person name="Davies P."/>
            <person name="de Pablos B."/>
            <person name="Delcher A."/>
            <person name="Deng Z."/>
            <person name="Mays A.D."/>
            <person name="Dew I."/>
            <person name="Dietz S.M."/>
            <person name="Dodson K."/>
            <person name="Doup L.E."/>
            <person name="Downes M."/>
            <person name="Dugan-Rocha S."/>
            <person name="Dunkov B.C."/>
            <person name="Dunn P."/>
            <person name="Durbin K.J."/>
            <person name="Evangelista C.C."/>
            <person name="Ferraz C."/>
            <person name="Ferriera S."/>
            <person name="Fleischmann W."/>
            <person name="Fosler C."/>
            <person name="Gabrielian A.E."/>
            <person name="Garg N.S."/>
            <person name="Gelbart W.M."/>
            <person name="Glasser K."/>
            <person name="Glodek A."/>
            <person name="Gong F."/>
            <person name="Gorrell J.H."/>
            <person name="Gu Z."/>
            <person name="Guan P."/>
            <person name="Harris M."/>
            <person name="Harris N.L."/>
            <person name="Harvey D.A."/>
            <person name="Heiman T.J."/>
            <person name="Hernandez J.R."/>
            <person name="Houck J."/>
            <person name="Hostin D."/>
            <person name="Houston K.A."/>
            <person name="Howland T.J."/>
            <person name="Wei M.-H."/>
            <person name="Ibegwam C."/>
            <person name="Jalali M."/>
            <person name="Kalush F."/>
            <person name="Karpen G.H."/>
            <person name="Ke Z."/>
            <person name="Kennison J.A."/>
            <person name="Ketchum K.A."/>
            <person name="Kimmel B.E."/>
            <person name="Kodira C.D."/>
            <person name="Kraft C.L."/>
            <person name="Kravitz S."/>
            <person name="Kulp D."/>
            <person name="Lai Z."/>
            <person name="Lasko P."/>
            <person name="Lei Y."/>
            <person name="Levitsky A.A."/>
            <person name="Li J.H."/>
            <person name="Li Z."/>
            <person name="Liang Y."/>
            <person name="Lin X."/>
            <person name="Liu X."/>
            <person name="Mattei B."/>
            <person name="McIntosh T.C."/>
            <person name="McLeod M.P."/>
            <person name="McPherson D."/>
            <person name="Merkulov G."/>
            <person name="Milshina N.V."/>
            <person name="Mobarry C."/>
            <person name="Morris J."/>
            <person name="Moshrefi A."/>
            <person name="Mount S.M."/>
            <person name="Moy M."/>
            <person name="Murphy B."/>
            <person name="Murphy L."/>
            <person name="Muzny D.M."/>
            <person name="Nelson D.L."/>
            <person name="Nelson D.R."/>
            <person name="Nelson K.A."/>
            <person name="Nixon K."/>
            <person name="Nusskern D.R."/>
            <person name="Pacleb J.M."/>
            <person name="Palazzolo M."/>
            <person name="Pittman G.S."/>
            <person name="Pan S."/>
            <person name="Pollard J."/>
            <person name="Puri V."/>
            <person name="Reese M.G."/>
            <person name="Reinert K."/>
            <person name="Remington K."/>
            <person name="Saunders R.D.C."/>
            <person name="Scheeler F."/>
            <person name="Shen H."/>
            <person name="Shue B.C."/>
            <person name="Siden-Kiamos I."/>
            <person name="Simpson M."/>
            <person name="Skupski M.P."/>
            <person name="Smith T.J."/>
            <person name="Spier E."/>
            <person name="Spradling A.C."/>
            <person name="Stapleton M."/>
            <person name="Strong R."/>
            <person name="Sun E."/>
            <person name="Svirskas R."/>
            <person name="Tector C."/>
            <person name="Turner R."/>
            <person name="Venter E."/>
            <person name="Wang A.H."/>
            <person name="Wang X."/>
            <person name="Wang Z.-Y."/>
            <person name="Wassarman D.A."/>
            <person name="Weinstock G.M."/>
            <person name="Weissenbach J."/>
            <person name="Williams S.M."/>
            <person name="Woodage T."/>
            <person name="Worley K.C."/>
            <person name="Wu D."/>
            <person name="Yang S."/>
            <person name="Yao Q.A."/>
            <person name="Ye J."/>
            <person name="Yeh R.-F."/>
            <person name="Zaveri J.S."/>
            <person name="Zhan M."/>
            <person name="Zhang G."/>
            <person name="Zhao Q."/>
            <person name="Zheng L."/>
            <person name="Zheng X.H."/>
            <person name="Zhong F.N."/>
            <person name="Zhong W."/>
            <person name="Zhou X."/>
            <person name="Zhu S.C."/>
            <person name="Zhu X."/>
            <person name="Smith H.O."/>
            <person name="Gibbs R.A."/>
            <person name="Myers E.W."/>
            <person name="Rubin G.M."/>
            <person name="Venter J.C."/>
        </authorList>
    </citation>
    <scope>NUCLEOTIDE SEQUENCE [LARGE SCALE GENOMIC DNA]</scope>
    <source>
        <strain>Berkeley</strain>
    </source>
</reference>
<reference key="3">
    <citation type="journal article" date="2002" name="Genome Biol.">
        <title>Annotation of the Drosophila melanogaster euchromatic genome: a systematic review.</title>
        <authorList>
            <person name="Misra S."/>
            <person name="Crosby M.A."/>
            <person name="Mungall C.J."/>
            <person name="Matthews B.B."/>
            <person name="Campbell K.S."/>
            <person name="Hradecky P."/>
            <person name="Huang Y."/>
            <person name="Kaminker J.S."/>
            <person name="Millburn G.H."/>
            <person name="Prochnik S.E."/>
            <person name="Smith C.D."/>
            <person name="Tupy J.L."/>
            <person name="Whitfield E.J."/>
            <person name="Bayraktaroglu L."/>
            <person name="Berman B.P."/>
            <person name="Bettencourt B.R."/>
            <person name="Celniker S.E."/>
            <person name="de Grey A.D.N.J."/>
            <person name="Drysdale R.A."/>
            <person name="Harris N.L."/>
            <person name="Richter J."/>
            <person name="Russo S."/>
            <person name="Schroeder A.J."/>
            <person name="Shu S.Q."/>
            <person name="Stapleton M."/>
            <person name="Yamada C."/>
            <person name="Ashburner M."/>
            <person name="Gelbart W.M."/>
            <person name="Rubin G.M."/>
            <person name="Lewis S.E."/>
        </authorList>
    </citation>
    <scope>GENOME REANNOTATION</scope>
    <source>
        <strain>Berkeley</strain>
    </source>
</reference>
<reference key="4">
    <citation type="journal article" date="2002" name="Genome Biol.">
        <title>A Drosophila full-length cDNA resource.</title>
        <authorList>
            <person name="Stapleton M."/>
            <person name="Carlson J.W."/>
            <person name="Brokstein P."/>
            <person name="Yu C."/>
            <person name="Champe M."/>
            <person name="George R.A."/>
            <person name="Guarin H."/>
            <person name="Kronmiller B."/>
            <person name="Pacleb J.M."/>
            <person name="Park S."/>
            <person name="Wan K.H."/>
            <person name="Rubin G.M."/>
            <person name="Celniker S.E."/>
        </authorList>
    </citation>
    <scope>NUCLEOTIDE SEQUENCE [LARGE SCALE MRNA]</scope>
    <source>
        <strain>Berkeley</strain>
        <tissue>Embryo</tissue>
    </source>
</reference>
<reference key="5">
    <citation type="journal article" date="2000" name="Development">
        <title>Nanos interacts with cup in the female germline of Drosophila.</title>
        <authorList>
            <person name="Verrotti A.C."/>
            <person name="Wharton R.P."/>
        </authorList>
    </citation>
    <scope>INTERACTION WITH NANOS</scope>
</reference>
<reference key="6">
    <citation type="journal article" date="2000" name="J. Cell Biol.">
        <title>Isolation of a ribonucleoprotein complex involved in mRNA localization in Drosophila oocytes.</title>
        <authorList>
            <person name="Wilhelm J.E."/>
            <person name="Mansfield J."/>
            <person name="Hom-Booher N."/>
            <person name="Wang S."/>
            <person name="Turck C.W."/>
            <person name="Hazelrigg T."/>
            <person name="Vale R.D."/>
        </authorList>
    </citation>
    <scope>IDENTIFICATION IN THE OSK RNP COMPLEX</scope>
</reference>
<reference key="7">
    <citation type="journal article" date="2003" name="J. Cell Biol.">
        <title>Cup is an eIF4E binding protein required for both the translational repression of oskar and the recruitment of Barentsz.</title>
        <authorList>
            <person name="Wilhelm J.E."/>
            <person name="Hilton M."/>
            <person name="Amos Q."/>
            <person name="Henzel W.J."/>
        </authorList>
    </citation>
    <scope>FUNCTION</scope>
    <scope>INTERACTION WITH BTZ AND EIF-4E</scope>
</reference>
<reference key="8">
    <citation type="journal article" date="2004" name="Dev. Cell">
        <title>Drosophila Cup is an eIF4E binding protein that associates with Bruno and regulates oskar mRNA translation in oogenesis.</title>
        <authorList>
            <person name="Nakamura A."/>
            <person name="Sato K."/>
            <person name="Hanyu-Nakamura K."/>
        </authorList>
    </citation>
    <scope>FUNCTION</scope>
    <scope>INTERACTION WITH ARET AND EIF-4E</scope>
    <scope>MUTAGENESIS OF TYR-327 AND 332-LEU-MET-333</scope>
</reference>
<reference key="9">
    <citation type="journal article" date="2004" name="EMBO J.">
        <title>Drosophila Cup is an eIF4E-binding protein that functions in Smaug-mediated translational repression.</title>
        <authorList>
            <person name="Nelson M.R."/>
            <person name="Leidal A.M."/>
            <person name="Smibert C.A."/>
        </authorList>
    </citation>
    <scope>FUNCTION</scope>
    <scope>INTERACTION WITH SMG AND EIF-4E</scope>
    <scope>MUTAGENESIS OF TYR-327; LEU-364 AND LEU-368</scope>
</reference>
<reference key="10">
    <citation type="journal article" date="2004" name="Proc. Natl. Acad. Sci. U.S.A.">
        <title>Cup is a nucleocytoplasmic shuttling protein that interacts with the eukaryotic translation initiation factor 4E to modulate Drosophila ovary development.</title>
        <authorList>
            <person name="Zappavigna V."/>
            <person name="Piccioni F."/>
            <person name="Villaescusa J.C."/>
            <person name="Verrotti A.C."/>
        </authorList>
    </citation>
    <scope>FUNCTION</scope>
    <scope>INTERACTION WITH EIF-4E</scope>
    <scope>SUBCELLULAR LOCATION</scope>
</reference>
<reference key="11">
    <citation type="journal article" date="2006" name="Neuron">
        <title>Staufen- and FMRP-containing neuronal RNPs are structurally and functionally related to somatic P bodies.</title>
        <authorList>
            <person name="Barbee S.A."/>
            <person name="Estes P.S."/>
            <person name="Cziko A.M."/>
            <person name="Hillebrand J."/>
            <person name="Luedeman R.A."/>
            <person name="Coller J.M."/>
            <person name="Johnson N."/>
            <person name="Howlett I.C."/>
            <person name="Geng C."/>
            <person name="Ueda R."/>
            <person name="Brand A.H."/>
            <person name="Newbury S.F."/>
            <person name="Wilhelm J.E."/>
            <person name="Levine R.B."/>
            <person name="Nakamura A."/>
            <person name="Parker R."/>
            <person name="Ramaswami M."/>
        </authorList>
    </citation>
    <scope>SUBCELLULAR LOCATION</scope>
</reference>
<reference key="12">
    <citation type="journal article" date="2007" name="Genetics">
        <title>nup154 genetically interacts with cup and plays a cell-type-specific function during Drosophila melanogaster egg-chamber development.</title>
        <authorList>
            <person name="Grimaldi M.R."/>
            <person name="Cozzolino L."/>
            <person name="Malva C."/>
            <person name="Graziani F."/>
            <person name="Gigliotti S."/>
        </authorList>
    </citation>
    <scope>FUNCTION</scope>
    <scope>INTERACTION WITH NUP154</scope>
    <scope>SUBCELLULAR LOCATION</scope>
    <scope>DEVELOPMENTAL STAGE</scope>
</reference>
<reference key="13">
    <citation type="journal article" date="2008" name="J. Proteome Res.">
        <title>Phosphoproteome analysis of Drosophila melanogaster embryos.</title>
        <authorList>
            <person name="Zhai B."/>
            <person name="Villen J."/>
            <person name="Beausoleil S.A."/>
            <person name="Mintseris J."/>
            <person name="Gygi S.P."/>
        </authorList>
    </citation>
    <scope>PHOSPHORYLATION [LARGE SCALE ANALYSIS] AT SER-263; SER-270; SER-347; SER-350; THR-503; SER-509; SER-513; SER-520; SER-523 AND SER-524</scope>
    <scope>IDENTIFICATION BY MASS SPECTROMETRY</scope>
    <source>
        <tissue>Embryo</tissue>
    </source>
</reference>
<reference key="14">
    <citation type="journal article" date="2011" name="EMBO J.">
        <title>Smaug assembles an ATP-dependent stable complex repressing nanos mRNA translation at multiple levels.</title>
        <authorList>
            <person name="Jeske M."/>
            <person name="Moritz B."/>
            <person name="Anders A."/>
            <person name="Wahle E."/>
        </authorList>
    </citation>
    <scope>FUNCTION</scope>
    <scope>IDENTIFICATION IN THE NANOS RNP COMPLEX</scope>
</reference>
<reference key="15">
    <citation type="journal article" date="2011" name="Genes Dev.">
        <title>CUP promotes deadenylation and inhibits decapping of mRNA targets.</title>
        <authorList>
            <person name="Igreja C."/>
            <person name="Izaurralde E."/>
        </authorList>
    </citation>
    <scope>FUNCTION</scope>
    <scope>INTERACTION WITH EIF-4E; ME31B AND TRAL</scope>
</reference>
<reference key="16">
    <citation type="journal article" date="2011" name="PLoS ONE">
        <title>Cup blocks the precocious activation of the orb autoregulatory loop.</title>
        <authorList>
            <person name="Wong L.C."/>
            <person name="Schedl P."/>
        </authorList>
    </citation>
    <scope>FUNCTION</scope>
    <scope>INTERACTION WITH ORB</scope>
    <scope>DISRUPTION PHENOTYPE</scope>
</reference>
<reference key="17">
    <citation type="journal article" date="2012" name="J. Cell Sci.">
        <title>The translational repressor Cup is required for germ cell development in Drosophila.</title>
        <authorList>
            <person name="Ottone C."/>
            <person name="Gigliotti S."/>
            <person name="Giangrande A."/>
            <person name="Graziani F."/>
            <person name="Verrotti di Pianella A."/>
        </authorList>
    </citation>
    <scope>FUNCTION</scope>
    <scope>INTERACTION WITH OSK; VAS AND CCR4-NOT COMPLEX</scope>
    <scope>SUBCELLULAR LOCATION</scope>
    <scope>DEVELOPMENTAL STAGE</scope>
    <scope>DISRUPTION PHENOTYPE</scope>
</reference>
<reference key="18">
    <citation type="journal article" date="2014" name="Nucleic Acids Res.">
        <title>Human 4E-T represses translation of bound mRNAs and enhances microRNA-mediated silencing.</title>
        <authorList>
            <person name="Kamenska A."/>
            <person name="Lu W.T."/>
            <person name="Kubacka D."/>
            <person name="Broomhead H."/>
            <person name="Minshall N."/>
            <person name="Bushell M."/>
            <person name="Standart N."/>
        </authorList>
    </citation>
    <scope>SUBCELLULAR LOCATION</scope>
</reference>
<reference key="19">
    <citation type="journal article" date="2017" name="Elife">
        <title>ME31B globally represses maternal mRNAs by two distinct mechanisms during the Drosophila maternal-to-zygotic transition.</title>
        <authorList>
            <person name="Wang M."/>
            <person name="Ly M."/>
            <person name="Lugowski A."/>
            <person name="Laver J.D."/>
            <person name="Lipshitz H.D."/>
            <person name="Smibert C.A."/>
            <person name="Rissland O.S."/>
        </authorList>
    </citation>
    <scope>FUNCTION</scope>
    <scope>IDENTIFICATION IN A COMPLEX WITH EIF4E1; ME31B; TRAL AND PABP</scope>
    <scope>DEVELOPMENTAL STAGE</scope>
</reference>
<reference evidence="20" key="20">
    <citation type="journal article" date="2012" name="RNA">
        <title>Crystal structure of a minimal eIF4E-Cup complex reveals a general mechanism of eIF4E regulation in translational repression.</title>
        <authorList>
            <person name="Kinkelin K."/>
            <person name="Veith K."/>
            <person name="Grunwald M."/>
            <person name="Bono F."/>
        </authorList>
    </citation>
    <scope>X-RAY CRYSTALLOGRAPHY (2.80 ANGSTROMS) OF 296-425 IN COMPLEX WITH EIF4E1</scope>
    <scope>INTERACTION WITH EIF4E1</scope>
</reference>
<feature type="chain" id="PRO_0000079561" description="Protein cup">
    <location>
        <begin position="1"/>
        <end position="1117"/>
    </location>
</feature>
<feature type="region of interest" description="Disordered" evidence="1">
    <location>
        <begin position="1"/>
        <end position="106"/>
    </location>
</feature>
<feature type="region of interest" description="Disordered" evidence="1">
    <location>
        <begin position="270"/>
        <end position="326"/>
    </location>
</feature>
<feature type="region of interest" description="Disordered" evidence="1">
    <location>
        <begin position="493"/>
        <end position="528"/>
    </location>
</feature>
<feature type="region of interest" description="Disordered" evidence="1">
    <location>
        <begin position="596"/>
        <end position="618"/>
    </location>
</feature>
<feature type="region of interest" description="Disordered" evidence="1">
    <location>
        <begin position="654"/>
        <end position="673"/>
    </location>
</feature>
<feature type="region of interest" description="Disordered" evidence="1">
    <location>
        <begin position="679"/>
        <end position="728"/>
    </location>
</feature>
<feature type="region of interest" description="Disordered" evidence="1">
    <location>
        <begin position="984"/>
        <end position="1004"/>
    </location>
</feature>
<feature type="region of interest" description="Disordered" evidence="1">
    <location>
        <begin position="1016"/>
        <end position="1051"/>
    </location>
</feature>
<feature type="short sequence motif" description="YXXXXLphi motif 1" evidence="4 6">
    <location>
        <begin position="327"/>
        <end position="333"/>
    </location>
</feature>
<feature type="short sequence motif" description="YXXXXLphi motif 2" evidence="4">
    <location>
        <begin position="363"/>
        <end position="369"/>
    </location>
</feature>
<feature type="compositionally biased region" description="Pro residues" evidence="1">
    <location>
        <begin position="54"/>
        <end position="64"/>
    </location>
</feature>
<feature type="compositionally biased region" description="Pro residues" evidence="1">
    <location>
        <begin position="95"/>
        <end position="104"/>
    </location>
</feature>
<feature type="compositionally biased region" description="Polar residues" evidence="1">
    <location>
        <begin position="283"/>
        <end position="294"/>
    </location>
</feature>
<feature type="compositionally biased region" description="Low complexity" evidence="1">
    <location>
        <begin position="679"/>
        <end position="712"/>
    </location>
</feature>
<feature type="compositionally biased region" description="Low complexity" evidence="1">
    <location>
        <begin position="988"/>
        <end position="1001"/>
    </location>
</feature>
<feature type="modified residue" description="Phosphoserine" evidence="10">
    <location>
        <position position="263"/>
    </location>
</feature>
<feature type="modified residue" description="Phosphoserine" evidence="10">
    <location>
        <position position="270"/>
    </location>
</feature>
<feature type="modified residue" description="Phosphoserine" evidence="10">
    <location>
        <position position="347"/>
    </location>
</feature>
<feature type="modified residue" description="Phosphoserine" evidence="10">
    <location>
        <position position="350"/>
    </location>
</feature>
<feature type="modified residue" description="Phosphothreonine" evidence="10">
    <location>
        <position position="503"/>
    </location>
</feature>
<feature type="modified residue" description="Phosphoserine" evidence="10">
    <location>
        <position position="509"/>
    </location>
</feature>
<feature type="modified residue" description="Phosphoserine" evidence="10">
    <location>
        <position position="513"/>
    </location>
</feature>
<feature type="modified residue" description="Phosphoserine" evidence="10">
    <location>
        <position position="520"/>
    </location>
</feature>
<feature type="modified residue" description="Phosphoserine" evidence="10">
    <location>
        <position position="523"/>
    </location>
</feature>
<feature type="modified residue" description="Phosphoserine" evidence="10">
    <location>
        <position position="524"/>
    </location>
</feature>
<feature type="mutagenesis site" description="Strong reduction in interaction with eIF4E1. Strong reduction in interaction with eIF4E1; when associated with A-332 and A-348. Complete loss of interaction with eIF4E1; when associated with A-364 and A-368." evidence="4 6">
    <original>Y</original>
    <variation>A</variation>
    <location>
        <position position="327"/>
    </location>
</feature>
<feature type="mutagenesis site" description="Reduction in interaction with eIF4E1. Strong reduction in interaction with eIF4E1; when associated with A-327." evidence="6">
    <original>LM</original>
    <variation>AA</variation>
    <location>
        <begin position="332"/>
        <end position="333"/>
    </location>
</feature>
<feature type="mutagenesis site" description="Mild reduction in interaction with eIF4E1. Complete loss of interaction with eIF4E1; when associated with A-327 and A-368." evidence="4">
    <original>L</original>
    <variation>A</variation>
    <location>
        <position position="364"/>
    </location>
</feature>
<feature type="mutagenesis site" description="Mild reduction in interaction with eIF4E1. Complete loss of interaction with eIF4E1; when associated with A-327 and A-364." evidence="4">
    <original>L</original>
    <variation>A</variation>
    <location>
        <position position="368"/>
    </location>
</feature>
<feature type="sequence conflict" description="In Ref. 1; AAB64427." evidence="19" ref="1">
    <original>H</original>
    <variation>Q</variation>
    <location>
        <position position="836"/>
    </location>
</feature>
<feature type="sequence conflict" description="In Ref. 1; AAB64427." evidence="19" ref="1">
    <original>N</original>
    <variation>K</variation>
    <location>
        <position position="1030"/>
    </location>
</feature>
<feature type="sequence conflict" description="In Ref. 1; AAB64427." evidence="19" ref="1">
    <original>K</original>
    <variation>Q</variation>
    <location>
        <position position="1035"/>
    </location>
</feature>
<feature type="helix" evidence="21">
    <location>
        <begin position="329"/>
        <end position="337"/>
    </location>
</feature>
<feature type="helix" evidence="21">
    <location>
        <begin position="364"/>
        <end position="370"/>
    </location>
</feature>
<dbReference type="EMBL" id="AF004917">
    <property type="protein sequence ID" value="AAB64427.1"/>
    <property type="status" value="ALT_INIT"/>
    <property type="molecule type" value="mRNA"/>
</dbReference>
<dbReference type="EMBL" id="AE014134">
    <property type="protein sequence ID" value="AAF52418.3"/>
    <property type="molecule type" value="Genomic_DNA"/>
</dbReference>
<dbReference type="EMBL" id="AY069707">
    <property type="protein sequence ID" value="AAL39852.1"/>
    <property type="status" value="ALT_INIT"/>
    <property type="molecule type" value="mRNA"/>
</dbReference>
<dbReference type="RefSeq" id="NP_001285687.1">
    <property type="nucleotide sequence ID" value="NM_001298758.1"/>
</dbReference>
<dbReference type="RefSeq" id="NP_523493.3">
    <property type="nucleotide sequence ID" value="NM_078769.3"/>
</dbReference>
<dbReference type="PDB" id="4AXG">
    <property type="method" value="X-ray"/>
    <property type="resolution" value="2.80 A"/>
    <property type="chains" value="C/D=296-425"/>
</dbReference>
<dbReference type="PDBsum" id="4AXG"/>
<dbReference type="SMR" id="Q9VMA3"/>
<dbReference type="BioGRID" id="60088">
    <property type="interactions" value="66"/>
</dbReference>
<dbReference type="ComplexPortal" id="CPX-3177">
    <property type="entry name" value="eIF4E-cup complex"/>
</dbReference>
<dbReference type="DIP" id="DIP-17920N"/>
<dbReference type="ELM" id="Q9VMA3"/>
<dbReference type="FunCoup" id="Q9VMA3">
    <property type="interactions" value="59"/>
</dbReference>
<dbReference type="IntAct" id="Q9VMA3">
    <property type="interactions" value="17"/>
</dbReference>
<dbReference type="MINT" id="Q9VMA3"/>
<dbReference type="STRING" id="7227.FBpp0312102"/>
<dbReference type="GlyGen" id="Q9VMA3">
    <property type="glycosylation" value="1 site"/>
</dbReference>
<dbReference type="iPTMnet" id="Q9VMA3"/>
<dbReference type="PaxDb" id="7227-FBpp0288761"/>
<dbReference type="EnsemblMetazoa" id="FBtr0290322">
    <property type="protein sequence ID" value="FBpp0288761"/>
    <property type="gene ID" value="FBgn0000392"/>
</dbReference>
<dbReference type="EnsemblMetazoa" id="FBtr0346452">
    <property type="protein sequence ID" value="FBpp0312102"/>
    <property type="gene ID" value="FBgn0000392"/>
</dbReference>
<dbReference type="GeneID" id="33934"/>
<dbReference type="KEGG" id="dme:Dmel_CG11181"/>
<dbReference type="UCSC" id="CG11181-RB">
    <property type="organism name" value="d. melanogaster"/>
</dbReference>
<dbReference type="AGR" id="FB:FBgn0000392"/>
<dbReference type="CTD" id="33934"/>
<dbReference type="FlyBase" id="FBgn0000392">
    <property type="gene designation" value="cup"/>
</dbReference>
<dbReference type="VEuPathDB" id="VectorBase:FBgn0000392"/>
<dbReference type="eggNOG" id="ENOG502SXKW">
    <property type="taxonomic scope" value="Eukaryota"/>
</dbReference>
<dbReference type="HOGENOM" id="CLU_278765_0_0_1"/>
<dbReference type="InParanoid" id="Q9VMA3"/>
<dbReference type="OMA" id="MGMSNNR"/>
<dbReference type="OrthoDB" id="8916892at2759"/>
<dbReference type="PhylomeDB" id="Q9VMA3"/>
<dbReference type="SignaLink" id="Q9VMA3"/>
<dbReference type="BioGRID-ORCS" id="33934">
    <property type="hits" value="0 hits in 1 CRISPR screen"/>
</dbReference>
<dbReference type="CD-CODE" id="19A54EA0">
    <property type="entry name" value="Sponge body"/>
</dbReference>
<dbReference type="CD-CODE" id="A6E1D014">
    <property type="entry name" value="P-body"/>
</dbReference>
<dbReference type="ChiTaRS" id="cup">
    <property type="organism name" value="fly"/>
</dbReference>
<dbReference type="GenomeRNAi" id="33934"/>
<dbReference type="PRO" id="PR:Q9VMA3"/>
<dbReference type="Proteomes" id="UP000000803">
    <property type="component" value="Chromosome 2L"/>
</dbReference>
<dbReference type="Bgee" id="FBgn0000392">
    <property type="expression patterns" value="Expressed in ovary and 9 other cell types or tissues"/>
</dbReference>
<dbReference type="GO" id="GO:0005737">
    <property type="term" value="C:cytoplasm"/>
    <property type="evidence" value="ECO:0000314"/>
    <property type="project" value="FlyBase"/>
</dbReference>
<dbReference type="GO" id="GO:0005829">
    <property type="term" value="C:cytosol"/>
    <property type="evidence" value="ECO:0007005"/>
    <property type="project" value="FlyBase"/>
</dbReference>
<dbReference type="GO" id="GO:0031594">
    <property type="term" value="C:neuromuscular junction"/>
    <property type="evidence" value="ECO:0000314"/>
    <property type="project" value="FlyBase"/>
</dbReference>
<dbReference type="GO" id="GO:0071598">
    <property type="term" value="C:neuronal ribonucleoprotein granule"/>
    <property type="evidence" value="ECO:0000314"/>
    <property type="project" value="UniProtKB"/>
</dbReference>
<dbReference type="GO" id="GO:0005634">
    <property type="term" value="C:nucleus"/>
    <property type="evidence" value="ECO:0000314"/>
    <property type="project" value="FlyBase"/>
</dbReference>
<dbReference type="GO" id="GO:0000932">
    <property type="term" value="C:P-body"/>
    <property type="evidence" value="ECO:0000314"/>
    <property type="project" value="UniProtKB"/>
</dbReference>
<dbReference type="GO" id="GO:0043195">
    <property type="term" value="C:terminal bouton"/>
    <property type="evidence" value="ECO:0000314"/>
    <property type="project" value="FlyBase"/>
</dbReference>
<dbReference type="GO" id="GO:0008190">
    <property type="term" value="F:eukaryotic initiation factor 4E binding"/>
    <property type="evidence" value="ECO:0000314"/>
    <property type="project" value="FlyBase"/>
</dbReference>
<dbReference type="GO" id="GO:0003729">
    <property type="term" value="F:mRNA binding"/>
    <property type="evidence" value="ECO:0000318"/>
    <property type="project" value="GO_Central"/>
</dbReference>
<dbReference type="GO" id="GO:0003723">
    <property type="term" value="F:RNA binding"/>
    <property type="evidence" value="ECO:0000314"/>
    <property type="project" value="FlyBase"/>
</dbReference>
<dbReference type="GO" id="GO:0045182">
    <property type="term" value="F:translation regulator activity"/>
    <property type="evidence" value="ECO:0000314"/>
    <property type="project" value="UniProtKB"/>
</dbReference>
<dbReference type="GO" id="GO:0009953">
    <property type="term" value="P:dorsal/ventral pattern formation"/>
    <property type="evidence" value="ECO:0000315"/>
    <property type="project" value="FlyBase"/>
</dbReference>
<dbReference type="GO" id="GO:0007143">
    <property type="term" value="P:female meiotic nuclear division"/>
    <property type="evidence" value="ECO:0000316"/>
    <property type="project" value="UniProtKB"/>
</dbReference>
<dbReference type="GO" id="GO:0007297">
    <property type="term" value="P:follicle cell of egg chamber migration"/>
    <property type="evidence" value="ECO:0007001"/>
    <property type="project" value="FlyBase"/>
</dbReference>
<dbReference type="GO" id="GO:0008298">
    <property type="term" value="P:intracellular mRNA localization"/>
    <property type="evidence" value="ECO:0000315"/>
    <property type="project" value="FlyBase"/>
</dbReference>
<dbReference type="GO" id="GO:0045132">
    <property type="term" value="P:meiotic chromosome segregation"/>
    <property type="evidence" value="ECO:0000314"/>
    <property type="project" value="UniProtKB"/>
</dbReference>
<dbReference type="GO" id="GO:1905536">
    <property type="term" value="P:negative regulation of eukaryotic translation initiation factor 4F complex assembly"/>
    <property type="evidence" value="ECO:0000314"/>
    <property type="project" value="FlyBase"/>
</dbReference>
<dbReference type="GO" id="GO:0007319">
    <property type="term" value="P:negative regulation of oskar mRNA translation"/>
    <property type="evidence" value="ECO:0000314"/>
    <property type="project" value="FlyBase"/>
</dbReference>
<dbReference type="GO" id="GO:0017148">
    <property type="term" value="P:negative regulation of translation"/>
    <property type="evidence" value="ECO:0000315"/>
    <property type="project" value="FlyBase"/>
</dbReference>
<dbReference type="GO" id="GO:0045947">
    <property type="term" value="P:negative regulation of translational initiation"/>
    <property type="evidence" value="ECO:0000314"/>
    <property type="project" value="FlyBase"/>
</dbReference>
<dbReference type="GO" id="GO:0030715">
    <property type="term" value="P:oocyte growth in germarium-derived egg chamber"/>
    <property type="evidence" value="ECO:0000316"/>
    <property type="project" value="UniProtKB"/>
</dbReference>
<dbReference type="GO" id="GO:0048477">
    <property type="term" value="P:oogenesis"/>
    <property type="evidence" value="ECO:0000315"/>
    <property type="project" value="FlyBase"/>
</dbReference>
<dbReference type="GO" id="GO:0007317">
    <property type="term" value="P:regulation of pole plasm oskar mRNA localization"/>
    <property type="evidence" value="ECO:0000315"/>
    <property type="project" value="FlyBase"/>
</dbReference>
<dbReference type="GO" id="GO:0008582">
    <property type="term" value="P:regulation of synaptic assembly at neuromuscular junction"/>
    <property type="evidence" value="ECO:0000315"/>
    <property type="project" value="FlyBase"/>
</dbReference>
<dbReference type="DisProt" id="DP01494"/>
<dbReference type="IDEAL" id="IID50295"/>
<dbReference type="InterPro" id="IPR018862">
    <property type="entry name" value="eIF4E-T"/>
</dbReference>
<dbReference type="PANTHER" id="PTHR12269">
    <property type="entry name" value="EUKARYOTIC TRANSLATION INITIATION FACTOR 4E TRANSPORTER"/>
    <property type="match status" value="1"/>
</dbReference>
<dbReference type="PANTHER" id="PTHR12269:SF1">
    <property type="entry name" value="EUKARYOTIC TRANSLATION INITIATION FACTOR 4E TRANSPORTER"/>
    <property type="match status" value="1"/>
</dbReference>
<dbReference type="Pfam" id="PF10477">
    <property type="entry name" value="EIF4E-T"/>
    <property type="match status" value="1"/>
</dbReference>
<accession>Q9VMA3</accession>
<accession>O02432</accession>
<organism>
    <name type="scientific">Drosophila melanogaster</name>
    <name type="common">Fruit fly</name>
    <dbReference type="NCBI Taxonomy" id="7227"/>
    <lineage>
        <taxon>Eukaryota</taxon>
        <taxon>Metazoa</taxon>
        <taxon>Ecdysozoa</taxon>
        <taxon>Arthropoda</taxon>
        <taxon>Hexapoda</taxon>
        <taxon>Insecta</taxon>
        <taxon>Pterygota</taxon>
        <taxon>Neoptera</taxon>
        <taxon>Endopterygota</taxon>
        <taxon>Diptera</taxon>
        <taxon>Brachycera</taxon>
        <taxon>Muscomorpha</taxon>
        <taxon>Ephydroidea</taxon>
        <taxon>Drosophilidae</taxon>
        <taxon>Drosophila</taxon>
        <taxon>Sophophora</taxon>
    </lineage>
</organism>
<evidence type="ECO:0000256" key="1">
    <source>
        <dbReference type="SAM" id="MobiDB-lite"/>
    </source>
</evidence>
<evidence type="ECO:0000269" key="2">
    <source>
    </source>
</evidence>
<evidence type="ECO:0000269" key="3">
    <source>
    </source>
</evidence>
<evidence type="ECO:0000269" key="4">
    <source>
    </source>
</evidence>
<evidence type="ECO:0000269" key="5">
    <source>
    </source>
</evidence>
<evidence type="ECO:0000269" key="6">
    <source>
    </source>
</evidence>
<evidence type="ECO:0000269" key="7">
    <source>
    </source>
</evidence>
<evidence type="ECO:0000269" key="8">
    <source>
    </source>
</evidence>
<evidence type="ECO:0000269" key="9">
    <source>
    </source>
</evidence>
<evidence type="ECO:0000269" key="10">
    <source>
    </source>
</evidence>
<evidence type="ECO:0000269" key="11">
    <source>
    </source>
</evidence>
<evidence type="ECO:0000269" key="12">
    <source>
    </source>
</evidence>
<evidence type="ECO:0000269" key="13">
    <source>
    </source>
</evidence>
<evidence type="ECO:0000269" key="14">
    <source>
    </source>
</evidence>
<evidence type="ECO:0000269" key="15">
    <source>
    </source>
</evidence>
<evidence type="ECO:0000269" key="16">
    <source>
    </source>
</evidence>
<evidence type="ECO:0000269" key="17">
    <source>
    </source>
</evidence>
<evidence type="ECO:0000269" key="18">
    <source>
    </source>
</evidence>
<evidence type="ECO:0000305" key="19"/>
<evidence type="ECO:0007744" key="20">
    <source>
        <dbReference type="PDB" id="4AXG"/>
    </source>
</evidence>
<evidence type="ECO:0007829" key="21">
    <source>
        <dbReference type="PDB" id="4AXG"/>
    </source>
</evidence>
<sequence length="1117" mass="125672">MQMAEAEQENGAGALKIATNAGATDRPAHQQLPLPVEDQQDEVLTPAEKGKFEYPPPPPPPTPVQAPLATKATALNASQEHDDDEANSEKWEDPCAPPPPPPLPTSAFLATGLGYLKLPAFKLKDALEKAITKLEANKRTLKASPESSRSIKNKNVVALEMLPRRSNPETIGDGSMLASTSTAVMLQTKKPAVIVEMERRCKIINLLAKQNQILESISGEAIPMHGPSKHLHEDEGLTLQVLSARASTPYTQPSSMLSCTAVSCDLEHDSPRKQVASKEAVPEQQSSQVQQKRPPSTGIHKPGSLRAPKAVRPTTAPVVSSKPVKSYTRSRLMDIRNGMFNALMHRSKESFVMPRIATCDDIELEGRLRRMNIWRTSDGTRFRTRSTTANLNMNNNNNNECMPAFFKNKNKPNLISDESIIQSQPPQPQTEFQDPAIVNQRRIGSGRLNHSKWGYNDEDYHSYHNGKSQHMEEVNSKNSKNMTVLQFFDNGEISSQPQRRPNTPVMGMSINRSENDTLHSNESSEDLSRANENYVKRVMSGFLVVSKPKSRDVEDRHHRRYRNQNEEPEWFSCGPTSRLDTIELCGFDEDEEKMLKEGNKNHGLGETERETSKQKMDHKYKWTHAEPMGRSKYMPKHDTNNNHNVENMNNVMATEHQQQKEEKRPGSGRSFQFDKFNQSQQNYESSSYVNHQQPPQTQPQQMQQQSNTNTNNSKFMSFFANEGNSSSSSLNEFFKQAINQGHGNNPEQPKSLGHIGQMPSVDQLEAKWRRNSLNNVGETANKQTDNFQKLIGSLSSAKPQSQAVGYDAISNFIMQQQQYQQQQQKQHLIIQQQQQHTAFLASLQLKAILGRADTQLLLLRLTKGEISKHGLLVQLANPRLTDMDREAITAVLQFTNTQQQQQQHKQQLDMLSSTVIASQLQNLHNLAIVQQTLAARQQPQHNPQTQAPHQLSQEDLQAHANVIMRNAVMKRKIEEQTSKLINGGAKHQAQQQYLNRGQQRQARPDANSNALLHALISGGGNNHASGYPMNGQPQKHHSNLRFGDNQNFQSFESNQPHFATQYKQQYQQSQQQHPHQQPQQLNSLHQNNAGAVNSFNKAQMQAQSAISMLPNSGDEFH</sequence>
<gene>
    <name type="primary">cup</name>
    <name type="synonym">fs(2)cup</name>
    <name type="ORF">CG11181</name>
</gene>